<name>RS11_CLOPS</name>
<keyword id="KW-0687">Ribonucleoprotein</keyword>
<keyword id="KW-0689">Ribosomal protein</keyword>
<keyword id="KW-0694">RNA-binding</keyword>
<keyword id="KW-0699">rRNA-binding</keyword>
<accession>Q0SQH1</accession>
<reference key="1">
    <citation type="journal article" date="2006" name="Genome Res.">
        <title>Skewed genomic variability in strains of the toxigenic bacterial pathogen, Clostridium perfringens.</title>
        <authorList>
            <person name="Myers G.S.A."/>
            <person name="Rasko D.A."/>
            <person name="Cheung J.K."/>
            <person name="Ravel J."/>
            <person name="Seshadri R."/>
            <person name="DeBoy R.T."/>
            <person name="Ren Q."/>
            <person name="Varga J."/>
            <person name="Awad M.M."/>
            <person name="Brinkac L.M."/>
            <person name="Daugherty S.C."/>
            <person name="Haft D.H."/>
            <person name="Dodson R.J."/>
            <person name="Madupu R."/>
            <person name="Nelson W.C."/>
            <person name="Rosovitz M.J."/>
            <person name="Sullivan S.A."/>
            <person name="Khouri H."/>
            <person name="Dimitrov G.I."/>
            <person name="Watkins K.L."/>
            <person name="Mulligan S."/>
            <person name="Benton J."/>
            <person name="Radune D."/>
            <person name="Fisher D.J."/>
            <person name="Atkins H.S."/>
            <person name="Hiscox T."/>
            <person name="Jost B.H."/>
            <person name="Billington S.J."/>
            <person name="Songer J.G."/>
            <person name="McClane B.A."/>
            <person name="Titball R.W."/>
            <person name="Rood J.I."/>
            <person name="Melville S.B."/>
            <person name="Paulsen I.T."/>
        </authorList>
    </citation>
    <scope>NUCLEOTIDE SEQUENCE [LARGE SCALE GENOMIC DNA]</scope>
    <source>
        <strain>SM101 / Type A</strain>
    </source>
</reference>
<dbReference type="EMBL" id="CP000312">
    <property type="protein sequence ID" value="ABG87500.1"/>
    <property type="molecule type" value="Genomic_DNA"/>
</dbReference>
<dbReference type="RefSeq" id="WP_003454436.1">
    <property type="nucleotide sequence ID" value="NZ_CAXVKH010000004.1"/>
</dbReference>
<dbReference type="SMR" id="Q0SQH1"/>
<dbReference type="GeneID" id="93001036"/>
<dbReference type="KEGG" id="cpr:CPR_2372"/>
<dbReference type="Proteomes" id="UP000001824">
    <property type="component" value="Chromosome"/>
</dbReference>
<dbReference type="GO" id="GO:1990904">
    <property type="term" value="C:ribonucleoprotein complex"/>
    <property type="evidence" value="ECO:0007669"/>
    <property type="project" value="UniProtKB-KW"/>
</dbReference>
<dbReference type="GO" id="GO:0005840">
    <property type="term" value="C:ribosome"/>
    <property type="evidence" value="ECO:0007669"/>
    <property type="project" value="UniProtKB-KW"/>
</dbReference>
<dbReference type="GO" id="GO:0019843">
    <property type="term" value="F:rRNA binding"/>
    <property type="evidence" value="ECO:0007669"/>
    <property type="project" value="UniProtKB-UniRule"/>
</dbReference>
<dbReference type="GO" id="GO:0003735">
    <property type="term" value="F:structural constituent of ribosome"/>
    <property type="evidence" value="ECO:0007669"/>
    <property type="project" value="InterPro"/>
</dbReference>
<dbReference type="GO" id="GO:0006412">
    <property type="term" value="P:translation"/>
    <property type="evidence" value="ECO:0007669"/>
    <property type="project" value="UniProtKB-UniRule"/>
</dbReference>
<dbReference type="FunFam" id="3.30.420.80:FF:000001">
    <property type="entry name" value="30S ribosomal protein S11"/>
    <property type="match status" value="1"/>
</dbReference>
<dbReference type="Gene3D" id="3.30.420.80">
    <property type="entry name" value="Ribosomal protein S11"/>
    <property type="match status" value="1"/>
</dbReference>
<dbReference type="HAMAP" id="MF_01310">
    <property type="entry name" value="Ribosomal_uS11"/>
    <property type="match status" value="1"/>
</dbReference>
<dbReference type="InterPro" id="IPR001971">
    <property type="entry name" value="Ribosomal_uS11"/>
</dbReference>
<dbReference type="InterPro" id="IPR019981">
    <property type="entry name" value="Ribosomal_uS11_bac-type"/>
</dbReference>
<dbReference type="InterPro" id="IPR018102">
    <property type="entry name" value="Ribosomal_uS11_CS"/>
</dbReference>
<dbReference type="InterPro" id="IPR036967">
    <property type="entry name" value="Ribosomal_uS11_sf"/>
</dbReference>
<dbReference type="NCBIfam" id="NF003698">
    <property type="entry name" value="PRK05309.1"/>
    <property type="match status" value="1"/>
</dbReference>
<dbReference type="NCBIfam" id="TIGR03632">
    <property type="entry name" value="uS11_bact"/>
    <property type="match status" value="1"/>
</dbReference>
<dbReference type="PANTHER" id="PTHR11759">
    <property type="entry name" value="40S RIBOSOMAL PROTEIN S14/30S RIBOSOMAL PROTEIN S11"/>
    <property type="match status" value="1"/>
</dbReference>
<dbReference type="Pfam" id="PF00411">
    <property type="entry name" value="Ribosomal_S11"/>
    <property type="match status" value="1"/>
</dbReference>
<dbReference type="PIRSF" id="PIRSF002131">
    <property type="entry name" value="Ribosomal_S11"/>
    <property type="match status" value="1"/>
</dbReference>
<dbReference type="SUPFAM" id="SSF53137">
    <property type="entry name" value="Translational machinery components"/>
    <property type="match status" value="1"/>
</dbReference>
<dbReference type="PROSITE" id="PS00054">
    <property type="entry name" value="RIBOSOMAL_S11"/>
    <property type="match status" value="1"/>
</dbReference>
<protein>
    <recommendedName>
        <fullName evidence="1">Small ribosomal subunit protein uS11</fullName>
    </recommendedName>
    <alternativeName>
        <fullName evidence="3">30S ribosomal protein S11</fullName>
    </alternativeName>
</protein>
<gene>
    <name evidence="1" type="primary">rpsK</name>
    <name type="ordered locus">CPR_2372</name>
</gene>
<evidence type="ECO:0000255" key="1">
    <source>
        <dbReference type="HAMAP-Rule" id="MF_01310"/>
    </source>
</evidence>
<evidence type="ECO:0000256" key="2">
    <source>
        <dbReference type="SAM" id="MobiDB-lite"/>
    </source>
</evidence>
<evidence type="ECO:0000305" key="3"/>
<feature type="chain" id="PRO_0000294741" description="Small ribosomal subunit protein uS11">
    <location>
        <begin position="1"/>
        <end position="131"/>
    </location>
</feature>
<feature type="region of interest" description="Disordered" evidence="2">
    <location>
        <begin position="1"/>
        <end position="23"/>
    </location>
</feature>
<feature type="compositionally biased region" description="Basic residues" evidence="2">
    <location>
        <begin position="1"/>
        <end position="15"/>
    </location>
</feature>
<comment type="function">
    <text evidence="1">Located on the platform of the 30S subunit, it bridges several disparate RNA helices of the 16S rRNA. Forms part of the Shine-Dalgarno cleft in the 70S ribosome.</text>
</comment>
<comment type="subunit">
    <text evidence="1">Part of the 30S ribosomal subunit. Interacts with proteins S7 and S18. Binds to IF-3.</text>
</comment>
<comment type="similarity">
    <text evidence="1">Belongs to the universal ribosomal protein uS11 family.</text>
</comment>
<proteinExistence type="inferred from homology"/>
<sequence>MAAQKVKKTRRRKERKNVEHGAAHIQSTFNNSIVTLTDAKGNALAWASAGGLGFKGSRKSTPFAAQMAAETAAKAAMEHGLKSVEVYVKGPGAGREAAIRSLQAAGLEVTLIKDVTPIPHNGCRPPKRRRV</sequence>
<organism>
    <name type="scientific">Clostridium perfringens (strain SM101 / Type A)</name>
    <dbReference type="NCBI Taxonomy" id="289380"/>
    <lineage>
        <taxon>Bacteria</taxon>
        <taxon>Bacillati</taxon>
        <taxon>Bacillota</taxon>
        <taxon>Clostridia</taxon>
        <taxon>Eubacteriales</taxon>
        <taxon>Clostridiaceae</taxon>
        <taxon>Clostridium</taxon>
    </lineage>
</organism>